<dbReference type="EC" id="2.1.3.15" evidence="1"/>
<dbReference type="EMBL" id="CP000393">
    <property type="protein sequence ID" value="ABG50351.1"/>
    <property type="molecule type" value="Genomic_DNA"/>
</dbReference>
<dbReference type="RefSeq" id="WP_011610739.1">
    <property type="nucleotide sequence ID" value="NC_008312.1"/>
</dbReference>
<dbReference type="SMR" id="Q117H3"/>
<dbReference type="STRING" id="203124.Tery_0968"/>
<dbReference type="KEGG" id="ter:Tery_0968"/>
<dbReference type="eggNOG" id="COG0825">
    <property type="taxonomic scope" value="Bacteria"/>
</dbReference>
<dbReference type="HOGENOM" id="CLU_015486_0_2_3"/>
<dbReference type="OrthoDB" id="9808023at2"/>
<dbReference type="UniPathway" id="UPA00655">
    <property type="reaction ID" value="UER00711"/>
</dbReference>
<dbReference type="GO" id="GO:0009317">
    <property type="term" value="C:acetyl-CoA carboxylase complex"/>
    <property type="evidence" value="ECO:0007669"/>
    <property type="project" value="InterPro"/>
</dbReference>
<dbReference type="GO" id="GO:0003989">
    <property type="term" value="F:acetyl-CoA carboxylase activity"/>
    <property type="evidence" value="ECO:0007669"/>
    <property type="project" value="InterPro"/>
</dbReference>
<dbReference type="GO" id="GO:0005524">
    <property type="term" value="F:ATP binding"/>
    <property type="evidence" value="ECO:0007669"/>
    <property type="project" value="UniProtKB-KW"/>
</dbReference>
<dbReference type="GO" id="GO:0016743">
    <property type="term" value="F:carboxyl- or carbamoyltransferase activity"/>
    <property type="evidence" value="ECO:0007669"/>
    <property type="project" value="UniProtKB-UniRule"/>
</dbReference>
<dbReference type="GO" id="GO:0006633">
    <property type="term" value="P:fatty acid biosynthetic process"/>
    <property type="evidence" value="ECO:0007669"/>
    <property type="project" value="UniProtKB-KW"/>
</dbReference>
<dbReference type="GO" id="GO:2001295">
    <property type="term" value="P:malonyl-CoA biosynthetic process"/>
    <property type="evidence" value="ECO:0007669"/>
    <property type="project" value="UniProtKB-UniRule"/>
</dbReference>
<dbReference type="Gene3D" id="3.90.226.10">
    <property type="entry name" value="2-enoyl-CoA Hydratase, Chain A, domain 1"/>
    <property type="match status" value="1"/>
</dbReference>
<dbReference type="HAMAP" id="MF_00823">
    <property type="entry name" value="AcetylCoA_CT_alpha"/>
    <property type="match status" value="1"/>
</dbReference>
<dbReference type="InterPro" id="IPR001095">
    <property type="entry name" value="Acetyl_CoA_COase_a_su"/>
</dbReference>
<dbReference type="InterPro" id="IPR029045">
    <property type="entry name" value="ClpP/crotonase-like_dom_sf"/>
</dbReference>
<dbReference type="InterPro" id="IPR011763">
    <property type="entry name" value="COA_CT_C"/>
</dbReference>
<dbReference type="NCBIfam" id="TIGR00513">
    <property type="entry name" value="accA"/>
    <property type="match status" value="1"/>
</dbReference>
<dbReference type="NCBIfam" id="NF041504">
    <property type="entry name" value="AccA_sub"/>
    <property type="match status" value="1"/>
</dbReference>
<dbReference type="NCBIfam" id="NF004344">
    <property type="entry name" value="PRK05724.1"/>
    <property type="match status" value="1"/>
</dbReference>
<dbReference type="PANTHER" id="PTHR42853">
    <property type="entry name" value="ACETYL-COENZYME A CARBOXYLASE CARBOXYL TRANSFERASE SUBUNIT ALPHA"/>
    <property type="match status" value="1"/>
</dbReference>
<dbReference type="PANTHER" id="PTHR42853:SF3">
    <property type="entry name" value="ACETYL-COENZYME A CARBOXYLASE CARBOXYL TRANSFERASE SUBUNIT ALPHA, CHLOROPLASTIC"/>
    <property type="match status" value="1"/>
</dbReference>
<dbReference type="Pfam" id="PF03255">
    <property type="entry name" value="ACCA"/>
    <property type="match status" value="1"/>
</dbReference>
<dbReference type="PRINTS" id="PR01069">
    <property type="entry name" value="ACCCTRFRASEA"/>
</dbReference>
<dbReference type="SUPFAM" id="SSF52096">
    <property type="entry name" value="ClpP/crotonase"/>
    <property type="match status" value="1"/>
</dbReference>
<dbReference type="PROSITE" id="PS50989">
    <property type="entry name" value="COA_CT_CTER"/>
    <property type="match status" value="1"/>
</dbReference>
<name>ACCA_TRIEI</name>
<comment type="function">
    <text evidence="1">Component of the acetyl coenzyme A carboxylase (ACC) complex. First, biotin carboxylase catalyzes the carboxylation of biotin on its carrier protein (BCCP) and then the CO(2) group is transferred by the carboxyltransferase to acetyl-CoA to form malonyl-CoA.</text>
</comment>
<comment type="catalytic activity">
    <reaction evidence="1">
        <text>N(6)-carboxybiotinyl-L-lysyl-[protein] + acetyl-CoA = N(6)-biotinyl-L-lysyl-[protein] + malonyl-CoA</text>
        <dbReference type="Rhea" id="RHEA:54728"/>
        <dbReference type="Rhea" id="RHEA-COMP:10505"/>
        <dbReference type="Rhea" id="RHEA-COMP:10506"/>
        <dbReference type="ChEBI" id="CHEBI:57288"/>
        <dbReference type="ChEBI" id="CHEBI:57384"/>
        <dbReference type="ChEBI" id="CHEBI:83144"/>
        <dbReference type="ChEBI" id="CHEBI:83145"/>
        <dbReference type="EC" id="2.1.3.15"/>
    </reaction>
</comment>
<comment type="pathway">
    <text evidence="1">Lipid metabolism; malonyl-CoA biosynthesis; malonyl-CoA from acetyl-CoA: step 1/1.</text>
</comment>
<comment type="subunit">
    <text evidence="1">Acetyl-CoA carboxylase is a heterohexamer composed of biotin carboxyl carrier protein (AccB), biotin carboxylase (AccC) and two subunits each of ACCase subunit alpha (AccA) and ACCase subunit beta (AccD).</text>
</comment>
<comment type="subcellular location">
    <subcellularLocation>
        <location evidence="1">Cytoplasm</location>
    </subcellularLocation>
</comment>
<comment type="similarity">
    <text evidence="1">Belongs to the AccA family.</text>
</comment>
<organism>
    <name type="scientific">Trichodesmium erythraeum (strain IMS101)</name>
    <dbReference type="NCBI Taxonomy" id="203124"/>
    <lineage>
        <taxon>Bacteria</taxon>
        <taxon>Bacillati</taxon>
        <taxon>Cyanobacteriota</taxon>
        <taxon>Cyanophyceae</taxon>
        <taxon>Oscillatoriophycideae</taxon>
        <taxon>Oscillatoriales</taxon>
        <taxon>Microcoleaceae</taxon>
        <taxon>Trichodesmium</taxon>
    </lineage>
</organism>
<evidence type="ECO:0000255" key="1">
    <source>
        <dbReference type="HAMAP-Rule" id="MF_00823"/>
    </source>
</evidence>
<evidence type="ECO:0000255" key="2">
    <source>
        <dbReference type="PROSITE-ProRule" id="PRU01137"/>
    </source>
</evidence>
<feature type="chain" id="PRO_1000062695" description="Acetyl-coenzyme A carboxylase carboxyl transferase subunit alpha">
    <location>
        <begin position="1"/>
        <end position="324"/>
    </location>
</feature>
<feature type="domain" description="CoA carboxyltransferase C-terminal" evidence="2">
    <location>
        <begin position="44"/>
        <end position="298"/>
    </location>
</feature>
<protein>
    <recommendedName>
        <fullName evidence="1">Acetyl-coenzyme A carboxylase carboxyl transferase subunit alpha</fullName>
        <shortName evidence="1">ACCase subunit alpha</shortName>
        <shortName evidence="1">Acetyl-CoA carboxylase carboxyltransferase subunit alpha</shortName>
        <ecNumber evidence="1">2.1.3.15</ecNumber>
    </recommendedName>
</protein>
<sequence length="324" mass="35602">MPKSERKILLDFEKPLAELENRINQIRELAKDCSSVDVSEQIYQLEAKATQLRQEIFSSLSPVQKLQLARHPRRPTSLDYIQAISDEWIELHGDRGGSDDPAIVGGLARVNGRPVVIIGHQKGRDTKDNVARNFGMASAGGYRKSIRFMEHGNRFGMPILTFIDTPGAWPGIEAERLGQGEAIAYNLREMFHLDVPIICTVIGEGGSGGALGVGVGDRLLMLEHSIYTVASPEACAAILWKDASKASQAAEALKITSWDLKKIGIIDDVVPEPSGGAHANPLQAAENLKTAIVKSLDDLNHLSSPQRRKKRYQKFRSMGVFLET</sequence>
<proteinExistence type="inferred from homology"/>
<accession>Q117H3</accession>
<keyword id="KW-0067">ATP-binding</keyword>
<keyword id="KW-0963">Cytoplasm</keyword>
<keyword id="KW-0275">Fatty acid biosynthesis</keyword>
<keyword id="KW-0276">Fatty acid metabolism</keyword>
<keyword id="KW-0444">Lipid biosynthesis</keyword>
<keyword id="KW-0443">Lipid metabolism</keyword>
<keyword id="KW-0547">Nucleotide-binding</keyword>
<keyword id="KW-0808">Transferase</keyword>
<gene>
    <name evidence="1" type="primary">accA</name>
    <name type="ordered locus">Tery_0968</name>
</gene>
<reference key="1">
    <citation type="journal article" date="2015" name="Proc. Natl. Acad. Sci. U.S.A.">
        <title>Trichodesmium genome maintains abundant, widespread noncoding DNA in situ, despite oligotrophic lifestyle.</title>
        <authorList>
            <person name="Walworth N."/>
            <person name="Pfreundt U."/>
            <person name="Nelson W.C."/>
            <person name="Mincer T."/>
            <person name="Heidelberg J.F."/>
            <person name="Fu F."/>
            <person name="Waterbury J.B."/>
            <person name="Glavina del Rio T."/>
            <person name="Goodwin L."/>
            <person name="Kyrpides N.C."/>
            <person name="Land M.L."/>
            <person name="Woyke T."/>
            <person name="Hutchins D.A."/>
            <person name="Hess W.R."/>
            <person name="Webb E.A."/>
        </authorList>
    </citation>
    <scope>NUCLEOTIDE SEQUENCE [LARGE SCALE GENOMIC DNA]</scope>
    <source>
        <strain>IMS101</strain>
    </source>
</reference>